<dbReference type="EC" id="2.7.1.59" evidence="1"/>
<dbReference type="EMBL" id="CP000468">
    <property type="protein sequence ID" value="ABJ00503.1"/>
    <property type="molecule type" value="Genomic_DNA"/>
</dbReference>
<dbReference type="RefSeq" id="WP_000291301.1">
    <property type="nucleotide sequence ID" value="NZ_CADILS010000019.1"/>
</dbReference>
<dbReference type="SMR" id="A1AA13"/>
<dbReference type="KEGG" id="ecv:APECO1_200"/>
<dbReference type="HOGENOM" id="CLU_036604_0_3_6"/>
<dbReference type="UniPathway" id="UPA00544"/>
<dbReference type="Proteomes" id="UP000008216">
    <property type="component" value="Chromosome"/>
</dbReference>
<dbReference type="GO" id="GO:0005524">
    <property type="term" value="F:ATP binding"/>
    <property type="evidence" value="ECO:0007669"/>
    <property type="project" value="UniProtKB-UniRule"/>
</dbReference>
<dbReference type="GO" id="GO:0045127">
    <property type="term" value="F:N-acetylglucosamine kinase activity"/>
    <property type="evidence" value="ECO:0007669"/>
    <property type="project" value="UniProtKB-UniRule"/>
</dbReference>
<dbReference type="GO" id="GO:0008270">
    <property type="term" value="F:zinc ion binding"/>
    <property type="evidence" value="ECO:0007669"/>
    <property type="project" value="UniProtKB-UniRule"/>
</dbReference>
<dbReference type="GO" id="GO:0006044">
    <property type="term" value="P:N-acetylglucosamine metabolic process"/>
    <property type="evidence" value="ECO:0007669"/>
    <property type="project" value="UniProtKB-UniRule"/>
</dbReference>
<dbReference type="GO" id="GO:0009254">
    <property type="term" value="P:peptidoglycan turnover"/>
    <property type="evidence" value="ECO:0007669"/>
    <property type="project" value="UniProtKB-UniRule"/>
</dbReference>
<dbReference type="CDD" id="cd24057">
    <property type="entry name" value="ASKHA_NBD_ROK_NAGK"/>
    <property type="match status" value="1"/>
</dbReference>
<dbReference type="FunFam" id="3.30.420.40:FF:000049">
    <property type="entry name" value="N-acetyl-D-glucosamine kinase"/>
    <property type="match status" value="1"/>
</dbReference>
<dbReference type="FunFam" id="3.30.420.40:FF:000051">
    <property type="entry name" value="N-acetyl-D-glucosamine kinase"/>
    <property type="match status" value="1"/>
</dbReference>
<dbReference type="Gene3D" id="3.30.420.40">
    <property type="match status" value="2"/>
</dbReference>
<dbReference type="HAMAP" id="MF_01271">
    <property type="entry name" value="GlcNAc_kinase"/>
    <property type="match status" value="1"/>
</dbReference>
<dbReference type="InterPro" id="IPR043129">
    <property type="entry name" value="ATPase_NBD"/>
</dbReference>
<dbReference type="InterPro" id="IPR023505">
    <property type="entry name" value="N-acetyl-D-glucosamine_kinase"/>
</dbReference>
<dbReference type="InterPro" id="IPR000600">
    <property type="entry name" value="ROK"/>
</dbReference>
<dbReference type="InterPro" id="IPR049874">
    <property type="entry name" value="ROK_cs"/>
</dbReference>
<dbReference type="NCBIfam" id="NF009835">
    <property type="entry name" value="PRK13310.1"/>
    <property type="match status" value="1"/>
</dbReference>
<dbReference type="PANTHER" id="PTHR18964:SF162">
    <property type="entry name" value="N-ACETYL-D-GLUCOSAMINE KINASE"/>
    <property type="match status" value="1"/>
</dbReference>
<dbReference type="PANTHER" id="PTHR18964">
    <property type="entry name" value="ROK (REPRESSOR, ORF, KINASE) FAMILY"/>
    <property type="match status" value="1"/>
</dbReference>
<dbReference type="Pfam" id="PF00480">
    <property type="entry name" value="ROK"/>
    <property type="match status" value="1"/>
</dbReference>
<dbReference type="SUPFAM" id="SSF53067">
    <property type="entry name" value="Actin-like ATPase domain"/>
    <property type="match status" value="1"/>
</dbReference>
<dbReference type="PROSITE" id="PS01125">
    <property type="entry name" value="ROK"/>
    <property type="match status" value="1"/>
</dbReference>
<keyword id="KW-0067">ATP-binding</keyword>
<keyword id="KW-0119">Carbohydrate metabolism</keyword>
<keyword id="KW-0418">Kinase</keyword>
<keyword id="KW-0479">Metal-binding</keyword>
<keyword id="KW-0547">Nucleotide-binding</keyword>
<keyword id="KW-1185">Reference proteome</keyword>
<keyword id="KW-0808">Transferase</keyword>
<keyword id="KW-0862">Zinc</keyword>
<feature type="chain" id="PRO_0000301941" description="N-acetyl-D-glucosamine kinase">
    <location>
        <begin position="1"/>
        <end position="303"/>
    </location>
</feature>
<feature type="binding site" evidence="1">
    <location>
        <begin position="4"/>
        <end position="11"/>
    </location>
    <ligand>
        <name>ATP</name>
        <dbReference type="ChEBI" id="CHEBI:30616"/>
    </ligand>
</feature>
<feature type="binding site" evidence="1">
    <location>
        <begin position="133"/>
        <end position="140"/>
    </location>
    <ligand>
        <name>ATP</name>
        <dbReference type="ChEBI" id="CHEBI:30616"/>
    </ligand>
</feature>
<feature type="binding site" evidence="1">
    <location>
        <position position="157"/>
    </location>
    <ligand>
        <name>Zn(2+)</name>
        <dbReference type="ChEBI" id="CHEBI:29105"/>
    </ligand>
</feature>
<feature type="binding site" evidence="1">
    <location>
        <position position="177"/>
    </location>
    <ligand>
        <name>Zn(2+)</name>
        <dbReference type="ChEBI" id="CHEBI:29105"/>
    </ligand>
</feature>
<feature type="binding site" evidence="1">
    <location>
        <position position="179"/>
    </location>
    <ligand>
        <name>Zn(2+)</name>
        <dbReference type="ChEBI" id="CHEBI:29105"/>
    </ligand>
</feature>
<feature type="binding site" evidence="1">
    <location>
        <position position="184"/>
    </location>
    <ligand>
        <name>Zn(2+)</name>
        <dbReference type="ChEBI" id="CHEBI:29105"/>
    </ligand>
</feature>
<protein>
    <recommendedName>
        <fullName evidence="1">N-acetyl-D-glucosamine kinase</fullName>
        <ecNumber evidence="1">2.7.1.59</ecNumber>
    </recommendedName>
    <alternativeName>
        <fullName evidence="1">GlcNAc kinase</fullName>
    </alternativeName>
</protein>
<proteinExistence type="inferred from homology"/>
<comment type="function">
    <text evidence="1">Catalyzes the phosphorylation of N-acetyl-D-glucosamine (GlcNAc) derived from cell-wall degradation, yielding GlcNAc-6-P.</text>
</comment>
<comment type="catalytic activity">
    <reaction evidence="1">
        <text>N-acetyl-D-glucosamine + ATP = N-acetyl-D-glucosamine 6-phosphate + ADP + H(+)</text>
        <dbReference type="Rhea" id="RHEA:17417"/>
        <dbReference type="ChEBI" id="CHEBI:15378"/>
        <dbReference type="ChEBI" id="CHEBI:30616"/>
        <dbReference type="ChEBI" id="CHEBI:57513"/>
        <dbReference type="ChEBI" id="CHEBI:456216"/>
        <dbReference type="ChEBI" id="CHEBI:506227"/>
        <dbReference type="EC" id="2.7.1.59"/>
    </reaction>
</comment>
<comment type="pathway">
    <text evidence="1">Cell wall biogenesis; peptidoglycan recycling.</text>
</comment>
<comment type="similarity">
    <text evidence="1">Belongs to the ROK (NagC/XylR) family. NagK subfamily.</text>
</comment>
<sequence>MYYGFDIGGTKIALGVFDSGRQLQWEKRVPTPRDSYDAFLDAVCELVAEADRRFGCKGSVGIGIPGMPETEDGTLYAANVPAASGKPLRADLSARLDRDVRLDNDANCFALSEAWDDEFTQYPLVMGLILGTGVGGGLIFNGKPITGKSYITGEFGHMRLPVDALTMMGLDFPLRRCGCGQHGCIENYLSGRGFAWLYQHYYHQPLQAPEIIALYDQGDEQARAHVERYLDLLAVCLGNILTIVDPDLVVIGGGLSNFPAITTQLAERLPRHLLPVARVPRIERARHGDAGGMRGAAFLHLTD</sequence>
<name>NAGK_ECOK1</name>
<gene>
    <name evidence="1" type="primary">nagK</name>
    <name type="ordered locus">Ecok1_10090</name>
    <name type="ORF">APECO1_200</name>
</gene>
<evidence type="ECO:0000255" key="1">
    <source>
        <dbReference type="HAMAP-Rule" id="MF_01271"/>
    </source>
</evidence>
<accession>A1AA13</accession>
<reference key="1">
    <citation type="journal article" date="2007" name="J. Bacteriol.">
        <title>The genome sequence of avian pathogenic Escherichia coli strain O1:K1:H7 shares strong similarities with human extraintestinal pathogenic E. coli genomes.</title>
        <authorList>
            <person name="Johnson T.J."/>
            <person name="Kariyawasam S."/>
            <person name="Wannemuehler Y."/>
            <person name="Mangiamele P."/>
            <person name="Johnson S.J."/>
            <person name="Doetkott C."/>
            <person name="Skyberg J.A."/>
            <person name="Lynne A.M."/>
            <person name="Johnson J.R."/>
            <person name="Nolan L.K."/>
        </authorList>
    </citation>
    <scope>NUCLEOTIDE SEQUENCE [LARGE SCALE GENOMIC DNA]</scope>
</reference>
<organism>
    <name type="scientific">Escherichia coli O1:K1 / APEC</name>
    <dbReference type="NCBI Taxonomy" id="405955"/>
    <lineage>
        <taxon>Bacteria</taxon>
        <taxon>Pseudomonadati</taxon>
        <taxon>Pseudomonadota</taxon>
        <taxon>Gammaproteobacteria</taxon>
        <taxon>Enterobacterales</taxon>
        <taxon>Enterobacteriaceae</taxon>
        <taxon>Escherichia</taxon>
    </lineage>
</organism>